<accession>A1SUY9</accession>
<sequence>MDSKNCVVIAIAGASASGKSLIANTIYQELCEELGTNQIGMISEDSYYRDQSHLELELRKLTNYDHPKAFEHELLCSHLKMLKENCSVNIPVYSYTEHTRTLESETMTSKKVIILEGILLLNDSALREQIDVSIFIDTPLDICLMRRLVRDMAERERTMDSVLLQYTKTVRPMFLQFIEPSKQHADIIVPRGGKNRIAKDLLKTRIKYLLGK</sequence>
<proteinExistence type="inferred from homology"/>
<comment type="catalytic activity">
    <reaction evidence="1">
        <text>uridine + ATP = UMP + ADP + H(+)</text>
        <dbReference type="Rhea" id="RHEA:16825"/>
        <dbReference type="ChEBI" id="CHEBI:15378"/>
        <dbReference type="ChEBI" id="CHEBI:16704"/>
        <dbReference type="ChEBI" id="CHEBI:30616"/>
        <dbReference type="ChEBI" id="CHEBI:57865"/>
        <dbReference type="ChEBI" id="CHEBI:456216"/>
        <dbReference type="EC" id="2.7.1.48"/>
    </reaction>
</comment>
<comment type="catalytic activity">
    <reaction evidence="1">
        <text>cytidine + ATP = CMP + ADP + H(+)</text>
        <dbReference type="Rhea" id="RHEA:24674"/>
        <dbReference type="ChEBI" id="CHEBI:15378"/>
        <dbReference type="ChEBI" id="CHEBI:17562"/>
        <dbReference type="ChEBI" id="CHEBI:30616"/>
        <dbReference type="ChEBI" id="CHEBI:60377"/>
        <dbReference type="ChEBI" id="CHEBI:456216"/>
        <dbReference type="EC" id="2.7.1.48"/>
    </reaction>
</comment>
<comment type="pathway">
    <text evidence="1">Pyrimidine metabolism; CTP biosynthesis via salvage pathway; CTP from cytidine: step 1/3.</text>
</comment>
<comment type="pathway">
    <text evidence="1">Pyrimidine metabolism; UMP biosynthesis via salvage pathway; UMP from uridine: step 1/1.</text>
</comment>
<comment type="subcellular location">
    <subcellularLocation>
        <location evidence="1">Cytoplasm</location>
    </subcellularLocation>
</comment>
<comment type="similarity">
    <text evidence="1">Belongs to the uridine kinase family.</text>
</comment>
<gene>
    <name evidence="1" type="primary">udk</name>
    <name type="ordered locus">Ping_1489</name>
</gene>
<name>URK_PSYIN</name>
<protein>
    <recommendedName>
        <fullName evidence="1">Uridine kinase</fullName>
        <ecNumber evidence="1">2.7.1.48</ecNumber>
    </recommendedName>
    <alternativeName>
        <fullName evidence="1">Cytidine monophosphokinase</fullName>
    </alternativeName>
    <alternativeName>
        <fullName evidence="1">Uridine monophosphokinase</fullName>
    </alternativeName>
</protein>
<evidence type="ECO:0000255" key="1">
    <source>
        <dbReference type="HAMAP-Rule" id="MF_00551"/>
    </source>
</evidence>
<keyword id="KW-0067">ATP-binding</keyword>
<keyword id="KW-0963">Cytoplasm</keyword>
<keyword id="KW-0418">Kinase</keyword>
<keyword id="KW-0547">Nucleotide-binding</keyword>
<keyword id="KW-1185">Reference proteome</keyword>
<keyword id="KW-0808">Transferase</keyword>
<reference key="1">
    <citation type="journal article" date="2008" name="BMC Genomics">
        <title>Genomics of an extreme psychrophile, Psychromonas ingrahamii.</title>
        <authorList>
            <person name="Riley M."/>
            <person name="Staley J.T."/>
            <person name="Danchin A."/>
            <person name="Wang T.Z."/>
            <person name="Brettin T.S."/>
            <person name="Hauser L.J."/>
            <person name="Land M.L."/>
            <person name="Thompson L.S."/>
        </authorList>
    </citation>
    <scope>NUCLEOTIDE SEQUENCE [LARGE SCALE GENOMIC DNA]</scope>
    <source>
        <strain>DSM 17664 / CCUG 51855 / 37</strain>
    </source>
</reference>
<dbReference type="EC" id="2.7.1.48" evidence="1"/>
<dbReference type="EMBL" id="CP000510">
    <property type="protein sequence ID" value="ABM03304.1"/>
    <property type="molecule type" value="Genomic_DNA"/>
</dbReference>
<dbReference type="RefSeq" id="WP_011769864.1">
    <property type="nucleotide sequence ID" value="NC_008709.1"/>
</dbReference>
<dbReference type="SMR" id="A1SUY9"/>
<dbReference type="STRING" id="357804.Ping_1489"/>
<dbReference type="KEGG" id="pin:Ping_1489"/>
<dbReference type="eggNOG" id="COG0572">
    <property type="taxonomic scope" value="Bacteria"/>
</dbReference>
<dbReference type="HOGENOM" id="CLU_021278_1_2_6"/>
<dbReference type="OrthoDB" id="9777642at2"/>
<dbReference type="UniPathway" id="UPA00574">
    <property type="reaction ID" value="UER00637"/>
</dbReference>
<dbReference type="UniPathway" id="UPA00579">
    <property type="reaction ID" value="UER00640"/>
</dbReference>
<dbReference type="Proteomes" id="UP000000639">
    <property type="component" value="Chromosome"/>
</dbReference>
<dbReference type="GO" id="GO:0005737">
    <property type="term" value="C:cytoplasm"/>
    <property type="evidence" value="ECO:0007669"/>
    <property type="project" value="UniProtKB-SubCell"/>
</dbReference>
<dbReference type="GO" id="GO:0005524">
    <property type="term" value="F:ATP binding"/>
    <property type="evidence" value="ECO:0007669"/>
    <property type="project" value="UniProtKB-UniRule"/>
</dbReference>
<dbReference type="GO" id="GO:0043771">
    <property type="term" value="F:cytidine kinase activity"/>
    <property type="evidence" value="ECO:0007669"/>
    <property type="project" value="RHEA"/>
</dbReference>
<dbReference type="GO" id="GO:0004849">
    <property type="term" value="F:uridine kinase activity"/>
    <property type="evidence" value="ECO:0007669"/>
    <property type="project" value="UniProtKB-UniRule"/>
</dbReference>
<dbReference type="GO" id="GO:0044211">
    <property type="term" value="P:CTP salvage"/>
    <property type="evidence" value="ECO:0007669"/>
    <property type="project" value="UniProtKB-UniRule"/>
</dbReference>
<dbReference type="GO" id="GO:0044206">
    <property type="term" value="P:UMP salvage"/>
    <property type="evidence" value="ECO:0007669"/>
    <property type="project" value="UniProtKB-UniRule"/>
</dbReference>
<dbReference type="CDD" id="cd02023">
    <property type="entry name" value="UMPK"/>
    <property type="match status" value="1"/>
</dbReference>
<dbReference type="Gene3D" id="3.40.50.300">
    <property type="entry name" value="P-loop containing nucleotide triphosphate hydrolases"/>
    <property type="match status" value="1"/>
</dbReference>
<dbReference type="HAMAP" id="MF_00551">
    <property type="entry name" value="Uridine_kinase"/>
    <property type="match status" value="1"/>
</dbReference>
<dbReference type="InterPro" id="IPR027417">
    <property type="entry name" value="P-loop_NTPase"/>
</dbReference>
<dbReference type="InterPro" id="IPR006083">
    <property type="entry name" value="PRK/URK"/>
</dbReference>
<dbReference type="InterPro" id="IPR026008">
    <property type="entry name" value="Uridine_kinase"/>
</dbReference>
<dbReference type="InterPro" id="IPR000764">
    <property type="entry name" value="Uridine_kinase-like"/>
</dbReference>
<dbReference type="NCBIfam" id="NF004018">
    <property type="entry name" value="PRK05480.1"/>
    <property type="match status" value="1"/>
</dbReference>
<dbReference type="NCBIfam" id="TIGR00235">
    <property type="entry name" value="udk"/>
    <property type="match status" value="1"/>
</dbReference>
<dbReference type="PANTHER" id="PTHR10285">
    <property type="entry name" value="URIDINE KINASE"/>
    <property type="match status" value="1"/>
</dbReference>
<dbReference type="Pfam" id="PF00485">
    <property type="entry name" value="PRK"/>
    <property type="match status" value="1"/>
</dbReference>
<dbReference type="PRINTS" id="PR00988">
    <property type="entry name" value="URIDINKINASE"/>
</dbReference>
<dbReference type="SUPFAM" id="SSF52540">
    <property type="entry name" value="P-loop containing nucleoside triphosphate hydrolases"/>
    <property type="match status" value="1"/>
</dbReference>
<organism>
    <name type="scientific">Psychromonas ingrahamii (strain DSM 17664 / CCUG 51855 / 37)</name>
    <dbReference type="NCBI Taxonomy" id="357804"/>
    <lineage>
        <taxon>Bacteria</taxon>
        <taxon>Pseudomonadati</taxon>
        <taxon>Pseudomonadota</taxon>
        <taxon>Gammaproteobacteria</taxon>
        <taxon>Alteromonadales</taxon>
        <taxon>Psychromonadaceae</taxon>
        <taxon>Psychromonas</taxon>
    </lineage>
</organism>
<feature type="chain" id="PRO_1000017887" description="Uridine kinase">
    <location>
        <begin position="1"/>
        <end position="212"/>
    </location>
</feature>
<feature type="binding site" evidence="1">
    <location>
        <begin position="13"/>
        <end position="20"/>
    </location>
    <ligand>
        <name>ATP</name>
        <dbReference type="ChEBI" id="CHEBI:30616"/>
    </ligand>
</feature>